<comment type="subunit">
    <text evidence="1">Forms oligomers.</text>
</comment>
<comment type="subcellular location">
    <subcellularLocation>
        <location evidence="1">Cytoplasm</location>
        <location evidence="1">Nucleoid</location>
    </subcellularLocation>
</comment>
<comment type="similarity">
    <text evidence="1">Belongs to the MraZ family.</text>
</comment>
<keyword id="KW-0963">Cytoplasm</keyword>
<keyword id="KW-0238">DNA-binding</keyword>
<keyword id="KW-0677">Repeat</keyword>
<keyword id="KW-0804">Transcription</keyword>
<keyword id="KW-0805">Transcription regulation</keyword>
<evidence type="ECO:0000255" key="1">
    <source>
        <dbReference type="HAMAP-Rule" id="MF_01008"/>
    </source>
</evidence>
<evidence type="ECO:0000255" key="2">
    <source>
        <dbReference type="PROSITE-ProRule" id="PRU01076"/>
    </source>
</evidence>
<sequence>MFMGEYEHQLDAKGRMIIPSKFRYDLNERFIITRGLDKCLFGYTLEEWQQIEEKMKTLPMTKKDARKFMRMFFSGAIEVELDKQGRINIPQNLRKYASLTKECTVIGVSNRIEIWDRETWNDFYDESEESFEDIAEDLIDFDF</sequence>
<proteinExistence type="inferred from homology"/>
<organism>
    <name type="scientific">Staphylococcus haemolyticus (strain JCSC1435)</name>
    <dbReference type="NCBI Taxonomy" id="279808"/>
    <lineage>
        <taxon>Bacteria</taxon>
        <taxon>Bacillati</taxon>
        <taxon>Bacillota</taxon>
        <taxon>Bacilli</taxon>
        <taxon>Bacillales</taxon>
        <taxon>Staphylococcaceae</taxon>
        <taxon>Staphylococcus</taxon>
    </lineage>
</organism>
<reference key="1">
    <citation type="journal article" date="2005" name="J. Bacteriol.">
        <title>Whole-genome sequencing of Staphylococcus haemolyticus uncovers the extreme plasticity of its genome and the evolution of human-colonizing staphylococcal species.</title>
        <authorList>
            <person name="Takeuchi F."/>
            <person name="Watanabe S."/>
            <person name="Baba T."/>
            <person name="Yuzawa H."/>
            <person name="Ito T."/>
            <person name="Morimoto Y."/>
            <person name="Kuroda M."/>
            <person name="Cui L."/>
            <person name="Takahashi M."/>
            <person name="Ankai A."/>
            <person name="Baba S."/>
            <person name="Fukui S."/>
            <person name="Lee J.C."/>
            <person name="Hiramatsu K."/>
        </authorList>
    </citation>
    <scope>NUCLEOTIDE SEQUENCE [LARGE SCALE GENOMIC DNA]</scope>
    <source>
        <strain>JCSC1435</strain>
    </source>
</reference>
<feature type="chain" id="PRO_0000230112" description="Transcriptional regulator MraZ">
    <location>
        <begin position="1"/>
        <end position="143"/>
    </location>
</feature>
<feature type="domain" description="SpoVT-AbrB 1" evidence="2">
    <location>
        <begin position="5"/>
        <end position="47"/>
    </location>
</feature>
<feature type="domain" description="SpoVT-AbrB 2" evidence="2">
    <location>
        <begin position="76"/>
        <end position="119"/>
    </location>
</feature>
<name>MRAZ_STAHJ</name>
<dbReference type="EMBL" id="AP006716">
    <property type="protein sequence ID" value="BAE05046.1"/>
    <property type="molecule type" value="Genomic_DNA"/>
</dbReference>
<dbReference type="RefSeq" id="WP_011276022.1">
    <property type="nucleotide sequence ID" value="NC_007168.1"/>
</dbReference>
<dbReference type="SMR" id="Q4L5M9"/>
<dbReference type="GeneID" id="93781115"/>
<dbReference type="KEGG" id="sha:SH1737"/>
<dbReference type="eggNOG" id="COG2001">
    <property type="taxonomic scope" value="Bacteria"/>
</dbReference>
<dbReference type="HOGENOM" id="CLU_107907_0_5_9"/>
<dbReference type="OrthoDB" id="9807753at2"/>
<dbReference type="Proteomes" id="UP000000543">
    <property type="component" value="Chromosome"/>
</dbReference>
<dbReference type="GO" id="GO:0005737">
    <property type="term" value="C:cytoplasm"/>
    <property type="evidence" value="ECO:0007669"/>
    <property type="project" value="UniProtKB-UniRule"/>
</dbReference>
<dbReference type="GO" id="GO:0009295">
    <property type="term" value="C:nucleoid"/>
    <property type="evidence" value="ECO:0007669"/>
    <property type="project" value="UniProtKB-SubCell"/>
</dbReference>
<dbReference type="GO" id="GO:0003700">
    <property type="term" value="F:DNA-binding transcription factor activity"/>
    <property type="evidence" value="ECO:0007669"/>
    <property type="project" value="UniProtKB-UniRule"/>
</dbReference>
<dbReference type="GO" id="GO:0000976">
    <property type="term" value="F:transcription cis-regulatory region binding"/>
    <property type="evidence" value="ECO:0007669"/>
    <property type="project" value="TreeGrafter"/>
</dbReference>
<dbReference type="GO" id="GO:2000143">
    <property type="term" value="P:negative regulation of DNA-templated transcription initiation"/>
    <property type="evidence" value="ECO:0007669"/>
    <property type="project" value="TreeGrafter"/>
</dbReference>
<dbReference type="CDD" id="cd16321">
    <property type="entry name" value="MraZ_C"/>
    <property type="match status" value="1"/>
</dbReference>
<dbReference type="CDD" id="cd16320">
    <property type="entry name" value="MraZ_N"/>
    <property type="match status" value="1"/>
</dbReference>
<dbReference type="FunFam" id="3.40.1550.20:FF:000002">
    <property type="entry name" value="Transcriptional regulator MraZ"/>
    <property type="match status" value="1"/>
</dbReference>
<dbReference type="Gene3D" id="3.40.1550.20">
    <property type="entry name" value="Transcriptional regulator MraZ domain"/>
    <property type="match status" value="1"/>
</dbReference>
<dbReference type="HAMAP" id="MF_01008">
    <property type="entry name" value="MraZ"/>
    <property type="match status" value="1"/>
</dbReference>
<dbReference type="InterPro" id="IPR003444">
    <property type="entry name" value="MraZ"/>
</dbReference>
<dbReference type="InterPro" id="IPR035644">
    <property type="entry name" value="MraZ_C"/>
</dbReference>
<dbReference type="InterPro" id="IPR020603">
    <property type="entry name" value="MraZ_dom"/>
</dbReference>
<dbReference type="InterPro" id="IPR035642">
    <property type="entry name" value="MraZ_N"/>
</dbReference>
<dbReference type="InterPro" id="IPR038619">
    <property type="entry name" value="MraZ_sf"/>
</dbReference>
<dbReference type="InterPro" id="IPR007159">
    <property type="entry name" value="SpoVT-AbrB_dom"/>
</dbReference>
<dbReference type="InterPro" id="IPR037914">
    <property type="entry name" value="SpoVT-AbrB_sf"/>
</dbReference>
<dbReference type="NCBIfam" id="TIGR00242">
    <property type="entry name" value="division/cell wall cluster transcriptional repressor MraZ"/>
    <property type="match status" value="1"/>
</dbReference>
<dbReference type="PANTHER" id="PTHR34701">
    <property type="entry name" value="TRANSCRIPTIONAL REGULATOR MRAZ"/>
    <property type="match status" value="1"/>
</dbReference>
<dbReference type="PANTHER" id="PTHR34701:SF1">
    <property type="entry name" value="TRANSCRIPTIONAL REGULATOR MRAZ"/>
    <property type="match status" value="1"/>
</dbReference>
<dbReference type="Pfam" id="PF02381">
    <property type="entry name" value="MraZ"/>
    <property type="match status" value="2"/>
</dbReference>
<dbReference type="SUPFAM" id="SSF89447">
    <property type="entry name" value="AbrB/MazE/MraZ-like"/>
    <property type="match status" value="1"/>
</dbReference>
<dbReference type="PROSITE" id="PS51740">
    <property type="entry name" value="SPOVT_ABRB"/>
    <property type="match status" value="2"/>
</dbReference>
<accession>Q4L5M9</accession>
<gene>
    <name evidence="1" type="primary">mraZ</name>
    <name type="ordered locus">SH1737</name>
</gene>
<protein>
    <recommendedName>
        <fullName>Transcriptional regulator MraZ</fullName>
    </recommendedName>
</protein>